<evidence type="ECO:0000255" key="1">
    <source>
        <dbReference type="HAMAP-Rule" id="MF_00651"/>
    </source>
</evidence>
<sequence>MQRISALGLDLGHRRIGVAGCDGTGLIATGLTTIRRTSFTKDMEILRQIVVDRQVKTLVVGLPYTMKGEVGTQAQKTQKLAKRIAKALDLPLDFIDERLTSHEAESMMREQRINPAEQKGMIDRKAAALILQRWLDQKPWLSST</sequence>
<comment type="function">
    <text evidence="1">Could be a nuclease involved in processing of the 5'-end of pre-16S rRNA.</text>
</comment>
<comment type="subcellular location">
    <subcellularLocation>
        <location evidence="1">Cytoplasm</location>
    </subcellularLocation>
</comment>
<comment type="similarity">
    <text evidence="1">Belongs to the YqgF nuclease family.</text>
</comment>
<name>YQGF_ACAM1</name>
<accession>B0C512</accession>
<feature type="chain" id="PRO_1000082732" description="Putative pre-16S rRNA nuclease">
    <location>
        <begin position="1"/>
        <end position="144"/>
    </location>
</feature>
<reference key="1">
    <citation type="journal article" date="2008" name="Proc. Natl. Acad. Sci. U.S.A.">
        <title>Niche adaptation and genome expansion in the chlorophyll d-producing cyanobacterium Acaryochloris marina.</title>
        <authorList>
            <person name="Swingley W.D."/>
            <person name="Chen M."/>
            <person name="Cheung P.C."/>
            <person name="Conrad A.L."/>
            <person name="Dejesa L.C."/>
            <person name="Hao J."/>
            <person name="Honchak B.M."/>
            <person name="Karbach L.E."/>
            <person name="Kurdoglu A."/>
            <person name="Lahiri S."/>
            <person name="Mastrian S.D."/>
            <person name="Miyashita H."/>
            <person name="Page L."/>
            <person name="Ramakrishna P."/>
            <person name="Satoh S."/>
            <person name="Sattley W.M."/>
            <person name="Shimada Y."/>
            <person name="Taylor H.L."/>
            <person name="Tomo T."/>
            <person name="Tsuchiya T."/>
            <person name="Wang Z.T."/>
            <person name="Raymond J."/>
            <person name="Mimuro M."/>
            <person name="Blankenship R.E."/>
            <person name="Touchman J.W."/>
        </authorList>
    </citation>
    <scope>NUCLEOTIDE SEQUENCE [LARGE SCALE GENOMIC DNA]</scope>
    <source>
        <strain>MBIC 11017</strain>
    </source>
</reference>
<organism>
    <name type="scientific">Acaryochloris marina (strain MBIC 11017)</name>
    <dbReference type="NCBI Taxonomy" id="329726"/>
    <lineage>
        <taxon>Bacteria</taxon>
        <taxon>Bacillati</taxon>
        <taxon>Cyanobacteriota</taxon>
        <taxon>Cyanophyceae</taxon>
        <taxon>Acaryochloridales</taxon>
        <taxon>Acaryochloridaceae</taxon>
        <taxon>Acaryochloris</taxon>
    </lineage>
</organism>
<dbReference type="EC" id="3.1.-.-" evidence="1"/>
<dbReference type="EMBL" id="CP000828">
    <property type="protein sequence ID" value="ABW25124.1"/>
    <property type="molecule type" value="Genomic_DNA"/>
</dbReference>
<dbReference type="SMR" id="B0C512"/>
<dbReference type="STRING" id="329726.AM1_0036"/>
<dbReference type="KEGG" id="amr:AM1_0036"/>
<dbReference type="eggNOG" id="COG0816">
    <property type="taxonomic scope" value="Bacteria"/>
</dbReference>
<dbReference type="HOGENOM" id="CLU_098240_2_0_3"/>
<dbReference type="OrthoDB" id="9796140at2"/>
<dbReference type="Proteomes" id="UP000000268">
    <property type="component" value="Chromosome"/>
</dbReference>
<dbReference type="GO" id="GO:0005829">
    <property type="term" value="C:cytosol"/>
    <property type="evidence" value="ECO:0007669"/>
    <property type="project" value="TreeGrafter"/>
</dbReference>
<dbReference type="GO" id="GO:0004518">
    <property type="term" value="F:nuclease activity"/>
    <property type="evidence" value="ECO:0007669"/>
    <property type="project" value="UniProtKB-KW"/>
</dbReference>
<dbReference type="GO" id="GO:0000967">
    <property type="term" value="P:rRNA 5'-end processing"/>
    <property type="evidence" value="ECO:0007669"/>
    <property type="project" value="UniProtKB-UniRule"/>
</dbReference>
<dbReference type="CDD" id="cd16964">
    <property type="entry name" value="YqgF"/>
    <property type="match status" value="1"/>
</dbReference>
<dbReference type="Gene3D" id="3.30.420.140">
    <property type="entry name" value="YqgF/RNase H-like domain"/>
    <property type="match status" value="1"/>
</dbReference>
<dbReference type="HAMAP" id="MF_00651">
    <property type="entry name" value="Nuclease_YqgF"/>
    <property type="match status" value="1"/>
</dbReference>
<dbReference type="InterPro" id="IPR012337">
    <property type="entry name" value="RNaseH-like_sf"/>
</dbReference>
<dbReference type="InterPro" id="IPR005227">
    <property type="entry name" value="YqgF"/>
</dbReference>
<dbReference type="InterPro" id="IPR006641">
    <property type="entry name" value="YqgF/RNaseH-like_dom"/>
</dbReference>
<dbReference type="InterPro" id="IPR037027">
    <property type="entry name" value="YqgF/RNaseH-like_dom_sf"/>
</dbReference>
<dbReference type="NCBIfam" id="TIGR00250">
    <property type="entry name" value="RNAse_H_YqgF"/>
    <property type="match status" value="1"/>
</dbReference>
<dbReference type="PANTHER" id="PTHR33317">
    <property type="entry name" value="POLYNUCLEOTIDYL TRANSFERASE, RIBONUCLEASE H-LIKE SUPERFAMILY PROTEIN"/>
    <property type="match status" value="1"/>
</dbReference>
<dbReference type="PANTHER" id="PTHR33317:SF4">
    <property type="entry name" value="POLYNUCLEOTIDYL TRANSFERASE, RIBONUCLEASE H-LIKE SUPERFAMILY PROTEIN"/>
    <property type="match status" value="1"/>
</dbReference>
<dbReference type="Pfam" id="PF03652">
    <property type="entry name" value="RuvX"/>
    <property type="match status" value="1"/>
</dbReference>
<dbReference type="SMART" id="SM00732">
    <property type="entry name" value="YqgFc"/>
    <property type="match status" value="1"/>
</dbReference>
<dbReference type="SUPFAM" id="SSF53098">
    <property type="entry name" value="Ribonuclease H-like"/>
    <property type="match status" value="1"/>
</dbReference>
<protein>
    <recommendedName>
        <fullName evidence="1">Putative pre-16S rRNA nuclease</fullName>
        <ecNumber evidence="1">3.1.-.-</ecNumber>
    </recommendedName>
</protein>
<keyword id="KW-0963">Cytoplasm</keyword>
<keyword id="KW-0378">Hydrolase</keyword>
<keyword id="KW-0540">Nuclease</keyword>
<keyword id="KW-1185">Reference proteome</keyword>
<keyword id="KW-0690">Ribosome biogenesis</keyword>
<proteinExistence type="inferred from homology"/>
<gene>
    <name type="ordered locus">AM1_0036</name>
</gene>